<reference key="1">
    <citation type="journal article" date="2004" name="Nature">
        <title>The DNA sequence and biology of human chromosome 19.</title>
        <authorList>
            <person name="Grimwood J."/>
            <person name="Gordon L.A."/>
            <person name="Olsen A.S."/>
            <person name="Terry A."/>
            <person name="Schmutz J."/>
            <person name="Lamerdin J.E."/>
            <person name="Hellsten U."/>
            <person name="Goodstein D."/>
            <person name="Couronne O."/>
            <person name="Tran-Gyamfi M."/>
            <person name="Aerts A."/>
            <person name="Altherr M."/>
            <person name="Ashworth L."/>
            <person name="Bajorek E."/>
            <person name="Black S."/>
            <person name="Branscomb E."/>
            <person name="Caenepeel S."/>
            <person name="Carrano A.V."/>
            <person name="Caoile C."/>
            <person name="Chan Y.M."/>
            <person name="Christensen M."/>
            <person name="Cleland C.A."/>
            <person name="Copeland A."/>
            <person name="Dalin E."/>
            <person name="Dehal P."/>
            <person name="Denys M."/>
            <person name="Detter J.C."/>
            <person name="Escobar J."/>
            <person name="Flowers D."/>
            <person name="Fotopulos D."/>
            <person name="Garcia C."/>
            <person name="Georgescu A.M."/>
            <person name="Glavina T."/>
            <person name="Gomez M."/>
            <person name="Gonzales E."/>
            <person name="Groza M."/>
            <person name="Hammon N."/>
            <person name="Hawkins T."/>
            <person name="Haydu L."/>
            <person name="Ho I."/>
            <person name="Huang W."/>
            <person name="Israni S."/>
            <person name="Jett J."/>
            <person name="Kadner K."/>
            <person name="Kimball H."/>
            <person name="Kobayashi A."/>
            <person name="Larionov V."/>
            <person name="Leem S.-H."/>
            <person name="Lopez F."/>
            <person name="Lou Y."/>
            <person name="Lowry S."/>
            <person name="Malfatti S."/>
            <person name="Martinez D."/>
            <person name="McCready P.M."/>
            <person name="Medina C."/>
            <person name="Morgan J."/>
            <person name="Nelson K."/>
            <person name="Nolan M."/>
            <person name="Ovcharenko I."/>
            <person name="Pitluck S."/>
            <person name="Pollard M."/>
            <person name="Popkie A.P."/>
            <person name="Predki P."/>
            <person name="Quan G."/>
            <person name="Ramirez L."/>
            <person name="Rash S."/>
            <person name="Retterer J."/>
            <person name="Rodriguez A."/>
            <person name="Rogers S."/>
            <person name="Salamov A."/>
            <person name="Salazar A."/>
            <person name="She X."/>
            <person name="Smith D."/>
            <person name="Slezak T."/>
            <person name="Solovyev V."/>
            <person name="Thayer N."/>
            <person name="Tice H."/>
            <person name="Tsai M."/>
            <person name="Ustaszewska A."/>
            <person name="Vo N."/>
            <person name="Wagner M."/>
            <person name="Wheeler J."/>
            <person name="Wu K."/>
            <person name="Xie G."/>
            <person name="Yang J."/>
            <person name="Dubchak I."/>
            <person name="Furey T.S."/>
            <person name="DeJong P."/>
            <person name="Dickson M."/>
            <person name="Gordon D."/>
            <person name="Eichler E.E."/>
            <person name="Pennacchio L.A."/>
            <person name="Richardson P."/>
            <person name="Stubbs L."/>
            <person name="Rokhsar D.S."/>
            <person name="Myers R.M."/>
            <person name="Rubin E.M."/>
            <person name="Lucas S.M."/>
        </authorList>
    </citation>
    <scope>NUCLEOTIDE SEQUENCE [LARGE SCALE GENOMIC DNA]</scope>
</reference>
<reference key="2">
    <citation type="journal article" date="2004" name="Genome Res.">
        <title>The status, quality, and expansion of the NIH full-length cDNA project: the Mammalian Gene Collection (MGC).</title>
        <authorList>
            <consortium name="The MGC Project Team"/>
        </authorList>
    </citation>
    <scope>NUCLEOTIDE SEQUENCE [LARGE SCALE MRNA] (ISOFORMS 1; 2 AND 3)</scope>
</reference>
<reference key="3">
    <citation type="journal article" date="2006" name="Am. J. Pathol.">
        <title>Methylation of multiple genes in gastric glands with intestinal metaplasia: a disorder with polyclonal origins.</title>
        <authorList>
            <person name="Mihara M."/>
            <person name="Yoshida Y."/>
            <person name="Tsukamoto T."/>
            <person name="Inada K."/>
            <person name="Nakanishi Y."/>
            <person name="Yagi Y."/>
            <person name="Imai K."/>
            <person name="Sugimura T."/>
            <person name="Tatematsu M."/>
            <person name="Ushijima T."/>
        </authorList>
    </citation>
    <scope>TISSUE SPECIFICITY</scope>
</reference>
<comment type="function">
    <text evidence="1">May be a transcriptional repressor.</text>
</comment>
<comment type="subunit">
    <text evidence="1">Interacts with HNRPK.</text>
</comment>
<comment type="interaction">
    <interactant intactId="EBI-20857691">
        <id>Q3SY52</id>
    </interactant>
    <interactant intactId="EBI-5235340">
        <id>Q7Z699</id>
        <label>SPRED1</label>
    </interactant>
    <organismsDiffer>false</organismsDiffer>
    <experiments>3</experiments>
</comment>
<comment type="subcellular location">
    <subcellularLocation>
        <location evidence="7">Nucleus</location>
    </subcellularLocation>
</comment>
<comment type="alternative products">
    <event type="alternative splicing"/>
    <isoform>
        <id>Q3SY52-1</id>
        <name>1</name>
        <sequence type="displayed"/>
    </isoform>
    <isoform>
        <id>Q3SY52-2</id>
        <name>2</name>
        <sequence type="described" ref="VSP_025147"/>
    </isoform>
    <isoform>
        <id>Q3SY52-3</id>
        <name>3</name>
        <sequence type="described" ref="VSP_025148"/>
    </isoform>
</comment>
<comment type="tissue specificity">
    <text evidence="5">Expressed at high levels in gastric glands, and at low levels in colon and small intestine. Silenced through promoter methylation in gastric glands with intestinal metaplasia.</text>
</comment>
<comment type="similarity">
    <text evidence="7">Belongs to the krueppel C2H2-type zinc-finger protein family.</text>
</comment>
<organism>
    <name type="scientific">Homo sapiens</name>
    <name type="common">Human</name>
    <dbReference type="NCBI Taxonomy" id="9606"/>
    <lineage>
        <taxon>Eukaryota</taxon>
        <taxon>Metazoa</taxon>
        <taxon>Chordata</taxon>
        <taxon>Craniata</taxon>
        <taxon>Vertebrata</taxon>
        <taxon>Euteleostomi</taxon>
        <taxon>Mammalia</taxon>
        <taxon>Eutheria</taxon>
        <taxon>Euarchontoglires</taxon>
        <taxon>Primates</taxon>
        <taxon>Haplorrhini</taxon>
        <taxon>Catarrhini</taxon>
        <taxon>Hominidae</taxon>
        <taxon>Homo</taxon>
    </lineage>
</organism>
<proteinExistence type="evidence at protein level"/>
<accession>Q3SY52</accession>
<accession>O43339</accession>
<accession>Q3SY51</accession>
<accession>Q3SY53</accession>
<keyword id="KW-0025">Alternative splicing</keyword>
<keyword id="KW-0238">DNA-binding</keyword>
<keyword id="KW-0479">Metal-binding</keyword>
<keyword id="KW-0539">Nucleus</keyword>
<keyword id="KW-1267">Proteomics identification</keyword>
<keyword id="KW-1185">Reference proteome</keyword>
<keyword id="KW-0677">Repeat</keyword>
<keyword id="KW-0678">Repressor</keyword>
<keyword id="KW-0804">Transcription</keyword>
<keyword id="KW-0805">Transcription regulation</keyword>
<keyword id="KW-0862">Zinc</keyword>
<keyword id="KW-0863">Zinc-finger</keyword>
<gene>
    <name type="primary">ZIK1</name>
    <name type="synonym">ZNF762</name>
</gene>
<evidence type="ECO:0000250" key="1"/>
<evidence type="ECO:0000255" key="2">
    <source>
        <dbReference type="PROSITE-ProRule" id="PRU00042"/>
    </source>
</evidence>
<evidence type="ECO:0000255" key="3">
    <source>
        <dbReference type="PROSITE-ProRule" id="PRU00119"/>
    </source>
</evidence>
<evidence type="ECO:0000256" key="4">
    <source>
        <dbReference type="SAM" id="MobiDB-lite"/>
    </source>
</evidence>
<evidence type="ECO:0000269" key="5">
    <source>
    </source>
</evidence>
<evidence type="ECO:0000303" key="6">
    <source>
    </source>
</evidence>
<evidence type="ECO:0000305" key="7"/>
<sequence>MAAAALRAPTQVTVSPETHMDLTKGCVTFEDIAIYFSQDEWGLLDEAQRLLYLEVMLENFALVASLGCGHGTEDEETPSDQNVSVGVSQSKAGSSTQKTQSCEMCVPVLKDILHLADLPGQKPYLVGECTNHHQHQKHHSAKKSLKRDMDRASYVKCCLFCMSLKPFRKWEVGKDLPAMLRLLRSLVFPGGKKPGTITECGEDIRSQKSHYKSGECGKASRHKHTPVYHPRVYTGKKLYECSKCGKAFRGKYSLVQHQRVHTGERPWECNECGKFFSQTSHLNDHRRIHTGERPYECSECGKLFRQNSSLVDHQKIHTGARPYECSQCGKSFSQKATLVKHQRVHTGERPYKCGECGNSFSQSAILNQHRRIHTGAKPYECGQCGKSFSQKATLIKHQRVHTGERPYKCGDCGKSFSQSSILIQHRRIHTGARPYECGQCGKSFSQKSGLIQHQVVHTGERPYECNKCGNSFSQCSSLIHHQKCHNT</sequence>
<dbReference type="EMBL" id="AC003682">
    <property type="protein sequence ID" value="AAC24608.1"/>
    <property type="molecule type" value="Genomic_DNA"/>
</dbReference>
<dbReference type="EMBL" id="BC103957">
    <property type="protein sequence ID" value="AAI03958.1"/>
    <property type="molecule type" value="mRNA"/>
</dbReference>
<dbReference type="EMBL" id="BC103958">
    <property type="protein sequence ID" value="AAI03959.1"/>
    <property type="molecule type" value="mRNA"/>
</dbReference>
<dbReference type="EMBL" id="BC103959">
    <property type="protein sequence ID" value="AAI03960.1"/>
    <property type="molecule type" value="mRNA"/>
</dbReference>
<dbReference type="CCDS" id="CCDS33135.1">
    <molecule id="Q3SY52-1"/>
</dbReference>
<dbReference type="CCDS" id="CCDS82408.1">
    <molecule id="Q3SY52-2"/>
</dbReference>
<dbReference type="RefSeq" id="NP_001010879.2">
    <molecule id="Q3SY52-1"/>
    <property type="nucleotide sequence ID" value="NM_001010879.4"/>
</dbReference>
<dbReference type="RefSeq" id="NP_001308074.1">
    <property type="nucleotide sequence ID" value="NM_001321145.1"/>
</dbReference>
<dbReference type="RefSeq" id="NP_001308075.1">
    <molecule id="Q3SY52-2"/>
    <property type="nucleotide sequence ID" value="NM_001321146.2"/>
</dbReference>
<dbReference type="RefSeq" id="NP_001308076.1">
    <molecule id="Q3SY52-3"/>
    <property type="nucleotide sequence ID" value="NM_001321147.2"/>
</dbReference>
<dbReference type="RefSeq" id="XP_011525068.1">
    <molecule id="Q3SY52-2"/>
    <property type="nucleotide sequence ID" value="XM_011526766.3"/>
</dbReference>
<dbReference type="RefSeq" id="XP_011525069.1">
    <molecule id="Q3SY52-3"/>
    <property type="nucleotide sequence ID" value="XM_011526767.4"/>
</dbReference>
<dbReference type="RefSeq" id="XP_054176562.1">
    <molecule id="Q3SY52-2"/>
    <property type="nucleotide sequence ID" value="XM_054320587.1"/>
</dbReference>
<dbReference type="RefSeq" id="XP_054176563.1">
    <molecule id="Q3SY52-3"/>
    <property type="nucleotide sequence ID" value="XM_054320588.1"/>
</dbReference>
<dbReference type="SMR" id="Q3SY52"/>
<dbReference type="BioGRID" id="129823">
    <property type="interactions" value="7"/>
</dbReference>
<dbReference type="FunCoup" id="Q3SY52">
    <property type="interactions" value="12"/>
</dbReference>
<dbReference type="IntAct" id="Q3SY52">
    <property type="interactions" value="4"/>
</dbReference>
<dbReference type="STRING" id="9606.ENSP00000472867"/>
<dbReference type="iPTMnet" id="Q3SY52"/>
<dbReference type="PhosphoSitePlus" id="Q3SY52"/>
<dbReference type="BioMuta" id="ZIK1"/>
<dbReference type="DMDM" id="121942960"/>
<dbReference type="jPOST" id="Q3SY52"/>
<dbReference type="MassIVE" id="Q3SY52"/>
<dbReference type="PaxDb" id="9606-ENSP00000472867"/>
<dbReference type="PeptideAtlas" id="Q3SY52"/>
<dbReference type="Antibodypedia" id="33273">
    <property type="antibodies" value="98 antibodies from 19 providers"/>
</dbReference>
<dbReference type="DNASU" id="284307"/>
<dbReference type="Ensembl" id="ENST00000597850.2">
    <molecule id="Q3SY52-1"/>
    <property type="protein sequence ID" value="ENSP00000472867.1"/>
    <property type="gene ID" value="ENSG00000171649.12"/>
</dbReference>
<dbReference type="Ensembl" id="ENST00000599456.1">
    <molecule id="Q3SY52-2"/>
    <property type="protein sequence ID" value="ENSP00000468937.1"/>
    <property type="gene ID" value="ENSG00000171649.12"/>
</dbReference>
<dbReference type="GeneID" id="284307"/>
<dbReference type="KEGG" id="hsa:284307"/>
<dbReference type="MANE-Select" id="ENST00000597850.2">
    <property type="protein sequence ID" value="ENSP00000472867.1"/>
    <property type="RefSeq nucleotide sequence ID" value="NM_001010879.4"/>
    <property type="RefSeq protein sequence ID" value="NP_001010879.2"/>
</dbReference>
<dbReference type="UCSC" id="uc002qpg.4">
    <molecule id="Q3SY52-1"/>
    <property type="organism name" value="human"/>
</dbReference>
<dbReference type="AGR" id="HGNC:33104"/>
<dbReference type="CTD" id="284307"/>
<dbReference type="DisGeNET" id="284307"/>
<dbReference type="GeneCards" id="ZIK1"/>
<dbReference type="HGNC" id="HGNC:33104">
    <property type="gene designation" value="ZIK1"/>
</dbReference>
<dbReference type="HPA" id="ENSG00000171649">
    <property type="expression patterns" value="Low tissue specificity"/>
</dbReference>
<dbReference type="neXtProt" id="NX_Q3SY52"/>
<dbReference type="OpenTargets" id="ENSG00000171649"/>
<dbReference type="PharmGKB" id="PA162409747"/>
<dbReference type="VEuPathDB" id="HostDB:ENSG00000171649"/>
<dbReference type="eggNOG" id="KOG1721">
    <property type="taxonomic scope" value="Eukaryota"/>
</dbReference>
<dbReference type="GeneTree" id="ENSGT00940000162907"/>
<dbReference type="HOGENOM" id="CLU_002678_55_4_1"/>
<dbReference type="InParanoid" id="Q3SY52"/>
<dbReference type="OMA" id="WDVEKDL"/>
<dbReference type="OrthoDB" id="8922241at2759"/>
<dbReference type="PAN-GO" id="Q3SY52">
    <property type="GO annotations" value="4 GO annotations based on evolutionary models"/>
</dbReference>
<dbReference type="PhylomeDB" id="Q3SY52"/>
<dbReference type="TreeFam" id="TF342033"/>
<dbReference type="PathwayCommons" id="Q3SY52"/>
<dbReference type="Reactome" id="R-HSA-212436">
    <property type="pathway name" value="Generic Transcription Pathway"/>
</dbReference>
<dbReference type="SignaLink" id="Q3SY52"/>
<dbReference type="BioGRID-ORCS" id="284307">
    <property type="hits" value="9 hits in 1166 CRISPR screens"/>
</dbReference>
<dbReference type="GenomeRNAi" id="284307"/>
<dbReference type="Pharos" id="Q3SY52">
    <property type="development level" value="Tbio"/>
</dbReference>
<dbReference type="PRO" id="PR:Q3SY52"/>
<dbReference type="Proteomes" id="UP000005640">
    <property type="component" value="Chromosome 19"/>
</dbReference>
<dbReference type="RNAct" id="Q3SY52">
    <property type="molecule type" value="protein"/>
</dbReference>
<dbReference type="Bgee" id="ENSG00000171649">
    <property type="expression patterns" value="Expressed in primordial germ cell in gonad and 112 other cell types or tissues"/>
</dbReference>
<dbReference type="ExpressionAtlas" id="Q3SY52">
    <property type="expression patterns" value="baseline and differential"/>
</dbReference>
<dbReference type="GO" id="GO:0005634">
    <property type="term" value="C:nucleus"/>
    <property type="evidence" value="ECO:0000318"/>
    <property type="project" value="GO_Central"/>
</dbReference>
<dbReference type="GO" id="GO:0000981">
    <property type="term" value="F:DNA-binding transcription factor activity, RNA polymerase II-specific"/>
    <property type="evidence" value="ECO:0000318"/>
    <property type="project" value="GO_Central"/>
</dbReference>
<dbReference type="GO" id="GO:0000978">
    <property type="term" value="F:RNA polymerase II cis-regulatory region sequence-specific DNA binding"/>
    <property type="evidence" value="ECO:0000318"/>
    <property type="project" value="GO_Central"/>
</dbReference>
<dbReference type="GO" id="GO:0008270">
    <property type="term" value="F:zinc ion binding"/>
    <property type="evidence" value="ECO:0007669"/>
    <property type="project" value="UniProtKB-KW"/>
</dbReference>
<dbReference type="GO" id="GO:0006357">
    <property type="term" value="P:regulation of transcription by RNA polymerase II"/>
    <property type="evidence" value="ECO:0000318"/>
    <property type="project" value="GO_Central"/>
</dbReference>
<dbReference type="CDD" id="cd07765">
    <property type="entry name" value="KRAB_A-box"/>
    <property type="match status" value="1"/>
</dbReference>
<dbReference type="FunFam" id="3.30.160.60:FF:000295">
    <property type="entry name" value="zinc finger protein 19"/>
    <property type="match status" value="1"/>
</dbReference>
<dbReference type="FunFam" id="3.30.160.60:FF:002343">
    <property type="entry name" value="Zinc finger protein 33A"/>
    <property type="match status" value="1"/>
</dbReference>
<dbReference type="FunFam" id="3.30.160.60:FF:000382">
    <property type="entry name" value="zinc finger protein 35 isoform X4"/>
    <property type="match status" value="1"/>
</dbReference>
<dbReference type="FunFam" id="3.30.160.60:FF:000200">
    <property type="entry name" value="zinc finger protein 510 isoform X2"/>
    <property type="match status" value="3"/>
</dbReference>
<dbReference type="FunFam" id="3.30.160.60:FF:000281">
    <property type="entry name" value="Zinc finger protein 558 isoform X1"/>
    <property type="match status" value="1"/>
</dbReference>
<dbReference type="FunFam" id="3.30.160.60:FF:001489">
    <property type="entry name" value="Zinc finger protein interacting with ribonucleoprotein K"/>
    <property type="match status" value="2"/>
</dbReference>
<dbReference type="Gene3D" id="6.10.140.140">
    <property type="match status" value="1"/>
</dbReference>
<dbReference type="Gene3D" id="3.30.160.60">
    <property type="entry name" value="Classic Zinc Finger"/>
    <property type="match status" value="9"/>
</dbReference>
<dbReference type="InterPro" id="IPR050589">
    <property type="entry name" value="Ikaros_C2H2-ZF"/>
</dbReference>
<dbReference type="InterPro" id="IPR001909">
    <property type="entry name" value="KRAB"/>
</dbReference>
<dbReference type="InterPro" id="IPR036051">
    <property type="entry name" value="KRAB_dom_sf"/>
</dbReference>
<dbReference type="InterPro" id="IPR056436">
    <property type="entry name" value="Znf-C2H2_ZIC1-5/GLI1-3-like"/>
</dbReference>
<dbReference type="InterPro" id="IPR036236">
    <property type="entry name" value="Znf_C2H2_sf"/>
</dbReference>
<dbReference type="InterPro" id="IPR013087">
    <property type="entry name" value="Znf_C2H2_type"/>
</dbReference>
<dbReference type="PANTHER" id="PTHR24404:SF114">
    <property type="entry name" value="KLUMPFUSS, ISOFORM B-RELATED"/>
    <property type="match status" value="1"/>
</dbReference>
<dbReference type="PANTHER" id="PTHR24404">
    <property type="entry name" value="ZINC FINGER PROTEIN"/>
    <property type="match status" value="1"/>
</dbReference>
<dbReference type="Pfam" id="PF01352">
    <property type="entry name" value="KRAB"/>
    <property type="match status" value="1"/>
</dbReference>
<dbReference type="Pfam" id="PF00096">
    <property type="entry name" value="zf-C2H2"/>
    <property type="match status" value="7"/>
</dbReference>
<dbReference type="Pfam" id="PF23561">
    <property type="entry name" value="zf-C2H2_15"/>
    <property type="match status" value="1"/>
</dbReference>
<dbReference type="SMART" id="SM00349">
    <property type="entry name" value="KRAB"/>
    <property type="match status" value="1"/>
</dbReference>
<dbReference type="SMART" id="SM00355">
    <property type="entry name" value="ZnF_C2H2"/>
    <property type="match status" value="9"/>
</dbReference>
<dbReference type="SUPFAM" id="SSF57667">
    <property type="entry name" value="beta-beta-alpha zinc fingers"/>
    <property type="match status" value="6"/>
</dbReference>
<dbReference type="SUPFAM" id="SSF109640">
    <property type="entry name" value="KRAB domain (Kruppel-associated box)"/>
    <property type="match status" value="1"/>
</dbReference>
<dbReference type="PROSITE" id="PS50805">
    <property type="entry name" value="KRAB"/>
    <property type="match status" value="1"/>
</dbReference>
<dbReference type="PROSITE" id="PS00028">
    <property type="entry name" value="ZINC_FINGER_C2H2_1"/>
    <property type="match status" value="9"/>
</dbReference>
<dbReference type="PROSITE" id="PS50157">
    <property type="entry name" value="ZINC_FINGER_C2H2_2"/>
    <property type="match status" value="9"/>
</dbReference>
<protein>
    <recommendedName>
        <fullName>Zinc finger protein interacting with ribonucleoprotein K</fullName>
    </recommendedName>
    <alternativeName>
        <fullName>Zinc finger protein 762</fullName>
    </alternativeName>
</protein>
<name>ZIK1_HUMAN</name>
<feature type="chain" id="PRO_0000286793" description="Zinc finger protein interacting with ribonucleoprotein K">
    <location>
        <begin position="1"/>
        <end position="487"/>
    </location>
</feature>
<feature type="domain" description="KRAB" evidence="3">
    <location>
        <begin position="27"/>
        <end position="136"/>
    </location>
</feature>
<feature type="zinc finger region" description="C2H2-type 1" evidence="2">
    <location>
        <begin position="239"/>
        <end position="261"/>
    </location>
</feature>
<feature type="zinc finger region" description="C2H2-type 2" evidence="2">
    <location>
        <begin position="267"/>
        <end position="289"/>
    </location>
</feature>
<feature type="zinc finger region" description="C2H2-type 3" evidence="2">
    <location>
        <begin position="295"/>
        <end position="317"/>
    </location>
</feature>
<feature type="zinc finger region" description="C2H2-type 4" evidence="2">
    <location>
        <begin position="323"/>
        <end position="345"/>
    </location>
</feature>
<feature type="zinc finger region" description="C2H2-type 5" evidence="2">
    <location>
        <begin position="351"/>
        <end position="373"/>
    </location>
</feature>
<feature type="zinc finger region" description="C2H2-type 6" evidence="2">
    <location>
        <begin position="379"/>
        <end position="401"/>
    </location>
</feature>
<feature type="zinc finger region" description="C2H2-type 7" evidence="2">
    <location>
        <begin position="407"/>
        <end position="429"/>
    </location>
</feature>
<feature type="zinc finger region" description="C2H2-type 8" evidence="2">
    <location>
        <begin position="435"/>
        <end position="457"/>
    </location>
</feature>
<feature type="zinc finger region" description="C2H2-type 9" evidence="2">
    <location>
        <begin position="463"/>
        <end position="485"/>
    </location>
</feature>
<feature type="region of interest" description="Disordered" evidence="4">
    <location>
        <begin position="71"/>
        <end position="94"/>
    </location>
</feature>
<feature type="compositionally biased region" description="Polar residues" evidence="4">
    <location>
        <begin position="79"/>
        <end position="94"/>
    </location>
</feature>
<feature type="splice variant" id="VSP_025148" description="In isoform 3." evidence="6">
    <location>
        <begin position="1"/>
        <end position="103"/>
    </location>
</feature>
<feature type="splice variant" id="VSP_025147" description="In isoform 2." evidence="6">
    <location>
        <begin position="1"/>
        <end position="55"/>
    </location>
</feature>
<feature type="sequence conflict" description="In Ref. 2; AAI03960." evidence="7" ref="2">
    <original>Q</original>
    <variation>K</variation>
    <location>
        <position position="207"/>
    </location>
</feature>